<accession>O95867</accession>
<accession>Q5SRS8</accession>
<accession>Q8IY94</accession>
<sequence>MKALMLLTLSVLLCWVSADIRCHSCYKVPVLGCVDRQSCRLEPGQQCLTTHAYLGKMWVFSNLRCGTPEEPCQEAFNQTNRKLGLTYNTTCCNKDNCNSAGPRPTPALGLVFLTSLAGLGLWLLH</sequence>
<proteinExistence type="evidence at protein level"/>
<reference key="1">
    <citation type="journal article" date="1999" name="J. Immunol.">
        <title>Genes encoding three new members of the leukocyte antigen 6 superfamily and a novel member of Ig superfamily, together with genes encoding the regulatory nuclear chloride ion channel protein (hRNCC) and an N omega-N omega-dimethylarginine dimethylaminohydrolase homologue, are found in a 30-kb segment of the MHC class III region.</title>
        <authorList>
            <person name="Ribas G."/>
            <person name="Neville M."/>
            <person name="Wixon J.L."/>
            <person name="Cheng J."/>
            <person name="Campbell R.D."/>
        </authorList>
    </citation>
    <scope>NUCLEOTIDE SEQUENCE [GENOMIC DNA]</scope>
</reference>
<reference key="2">
    <citation type="journal article" date="2002" name="Genomics">
        <title>Transcriptional analysis of a novel cluster of LY-6 family members in the human and mouse major histocompatibility complex: five genes with many splice forms.</title>
        <authorList>
            <person name="Mallya M."/>
            <person name="Campbell R.D."/>
            <person name="Aguado B."/>
        </authorList>
    </citation>
    <scope>NUCLEOTIDE SEQUENCE [MRNA]</scope>
</reference>
<reference key="3">
    <citation type="journal article" date="2003" name="Genome Res.">
        <title>Analysis of the gene-dense major histocompatibility complex class III region and its comparison to mouse.</title>
        <authorList>
            <person name="Xie T."/>
            <person name="Rowen L."/>
            <person name="Aguado B."/>
            <person name="Ahearn M.E."/>
            <person name="Madan A."/>
            <person name="Qin S."/>
            <person name="Campbell R.D."/>
            <person name="Hood L."/>
        </authorList>
    </citation>
    <scope>NUCLEOTIDE SEQUENCE [LARGE SCALE GENOMIC DNA]</scope>
</reference>
<reference key="4">
    <citation type="submission" date="1999-09" db="EMBL/GenBank/DDBJ databases">
        <title>Homo sapiens 2,229,817bp genomic DNA of 6p21.3 HLA class I region.</title>
        <authorList>
            <person name="Shiina S."/>
            <person name="Tamiya G."/>
            <person name="Oka A."/>
            <person name="Inoko H."/>
        </authorList>
    </citation>
    <scope>NUCLEOTIDE SEQUENCE [LARGE SCALE GENOMIC DNA]</scope>
</reference>
<reference key="5">
    <citation type="journal article" date="2003" name="Genome Res.">
        <title>The secreted protein discovery initiative (SPDI), a large-scale effort to identify novel human secreted and transmembrane proteins: a bioinformatics assessment.</title>
        <authorList>
            <person name="Clark H.F."/>
            <person name="Gurney A.L."/>
            <person name="Abaya E."/>
            <person name="Baker K."/>
            <person name="Baldwin D.T."/>
            <person name="Brush J."/>
            <person name="Chen J."/>
            <person name="Chow B."/>
            <person name="Chui C."/>
            <person name="Crowley C."/>
            <person name="Currell B."/>
            <person name="Deuel B."/>
            <person name="Dowd P."/>
            <person name="Eaton D."/>
            <person name="Foster J.S."/>
            <person name="Grimaldi C."/>
            <person name="Gu Q."/>
            <person name="Hass P.E."/>
            <person name="Heldens S."/>
            <person name="Huang A."/>
            <person name="Kim H.S."/>
            <person name="Klimowski L."/>
            <person name="Jin Y."/>
            <person name="Johnson S."/>
            <person name="Lee J."/>
            <person name="Lewis L."/>
            <person name="Liao D."/>
            <person name="Mark M.R."/>
            <person name="Robbie E."/>
            <person name="Sanchez C."/>
            <person name="Schoenfeld J."/>
            <person name="Seshagiri S."/>
            <person name="Simmons L."/>
            <person name="Singh J."/>
            <person name="Smith V."/>
            <person name="Stinson J."/>
            <person name="Vagts A."/>
            <person name="Vandlen R.L."/>
            <person name="Watanabe C."/>
            <person name="Wieand D."/>
            <person name="Woods K."/>
            <person name="Xie M.-H."/>
            <person name="Yansura D.G."/>
            <person name="Yi S."/>
            <person name="Yu G."/>
            <person name="Yuan J."/>
            <person name="Zhang M."/>
            <person name="Zhang Z."/>
            <person name="Goddard A.D."/>
            <person name="Wood W.I."/>
            <person name="Godowski P.J."/>
            <person name="Gray A.M."/>
        </authorList>
    </citation>
    <scope>NUCLEOTIDE SEQUENCE [LARGE SCALE MRNA]</scope>
</reference>
<reference key="6">
    <citation type="journal article" date="2003" name="Nature">
        <title>The DNA sequence and analysis of human chromosome 6.</title>
        <authorList>
            <person name="Mungall A.J."/>
            <person name="Palmer S.A."/>
            <person name="Sims S.K."/>
            <person name="Edwards C.A."/>
            <person name="Ashurst J.L."/>
            <person name="Wilming L."/>
            <person name="Jones M.C."/>
            <person name="Horton R."/>
            <person name="Hunt S.E."/>
            <person name="Scott C.E."/>
            <person name="Gilbert J.G.R."/>
            <person name="Clamp M.E."/>
            <person name="Bethel G."/>
            <person name="Milne S."/>
            <person name="Ainscough R."/>
            <person name="Almeida J.P."/>
            <person name="Ambrose K.D."/>
            <person name="Andrews T.D."/>
            <person name="Ashwell R.I.S."/>
            <person name="Babbage A.K."/>
            <person name="Bagguley C.L."/>
            <person name="Bailey J."/>
            <person name="Banerjee R."/>
            <person name="Barker D.J."/>
            <person name="Barlow K.F."/>
            <person name="Bates K."/>
            <person name="Beare D.M."/>
            <person name="Beasley H."/>
            <person name="Beasley O."/>
            <person name="Bird C.P."/>
            <person name="Blakey S.E."/>
            <person name="Bray-Allen S."/>
            <person name="Brook J."/>
            <person name="Brown A.J."/>
            <person name="Brown J.Y."/>
            <person name="Burford D.C."/>
            <person name="Burrill W."/>
            <person name="Burton J."/>
            <person name="Carder C."/>
            <person name="Carter N.P."/>
            <person name="Chapman J.C."/>
            <person name="Clark S.Y."/>
            <person name="Clark G."/>
            <person name="Clee C.M."/>
            <person name="Clegg S."/>
            <person name="Cobley V."/>
            <person name="Collier R.E."/>
            <person name="Collins J.E."/>
            <person name="Colman L.K."/>
            <person name="Corby N.R."/>
            <person name="Coville G.J."/>
            <person name="Culley K.M."/>
            <person name="Dhami P."/>
            <person name="Davies J."/>
            <person name="Dunn M."/>
            <person name="Earthrowl M.E."/>
            <person name="Ellington A.E."/>
            <person name="Evans K.A."/>
            <person name="Faulkner L."/>
            <person name="Francis M.D."/>
            <person name="Frankish A."/>
            <person name="Frankland J."/>
            <person name="French L."/>
            <person name="Garner P."/>
            <person name="Garnett J."/>
            <person name="Ghori M.J."/>
            <person name="Gilby L.M."/>
            <person name="Gillson C.J."/>
            <person name="Glithero R.J."/>
            <person name="Grafham D.V."/>
            <person name="Grant M."/>
            <person name="Gribble S."/>
            <person name="Griffiths C."/>
            <person name="Griffiths M.N.D."/>
            <person name="Hall R."/>
            <person name="Halls K.S."/>
            <person name="Hammond S."/>
            <person name="Harley J.L."/>
            <person name="Hart E.A."/>
            <person name="Heath P.D."/>
            <person name="Heathcott R."/>
            <person name="Holmes S.J."/>
            <person name="Howden P.J."/>
            <person name="Howe K.L."/>
            <person name="Howell G.R."/>
            <person name="Huckle E."/>
            <person name="Humphray S.J."/>
            <person name="Humphries M.D."/>
            <person name="Hunt A.R."/>
            <person name="Johnson C.M."/>
            <person name="Joy A.A."/>
            <person name="Kay M."/>
            <person name="Keenan S.J."/>
            <person name="Kimberley A.M."/>
            <person name="King A."/>
            <person name="Laird G.K."/>
            <person name="Langford C."/>
            <person name="Lawlor S."/>
            <person name="Leongamornlert D.A."/>
            <person name="Leversha M."/>
            <person name="Lloyd C.R."/>
            <person name="Lloyd D.M."/>
            <person name="Loveland J.E."/>
            <person name="Lovell J."/>
            <person name="Martin S."/>
            <person name="Mashreghi-Mohammadi M."/>
            <person name="Maslen G.L."/>
            <person name="Matthews L."/>
            <person name="McCann O.T."/>
            <person name="McLaren S.J."/>
            <person name="McLay K."/>
            <person name="McMurray A."/>
            <person name="Moore M.J.F."/>
            <person name="Mullikin J.C."/>
            <person name="Niblett D."/>
            <person name="Nickerson T."/>
            <person name="Novik K.L."/>
            <person name="Oliver K."/>
            <person name="Overton-Larty E.K."/>
            <person name="Parker A."/>
            <person name="Patel R."/>
            <person name="Pearce A.V."/>
            <person name="Peck A.I."/>
            <person name="Phillimore B.J.C.T."/>
            <person name="Phillips S."/>
            <person name="Plumb R.W."/>
            <person name="Porter K.M."/>
            <person name="Ramsey Y."/>
            <person name="Ranby S.A."/>
            <person name="Rice C.M."/>
            <person name="Ross M.T."/>
            <person name="Searle S.M."/>
            <person name="Sehra H.K."/>
            <person name="Sheridan E."/>
            <person name="Skuce C.D."/>
            <person name="Smith S."/>
            <person name="Smith M."/>
            <person name="Spraggon L."/>
            <person name="Squares S.L."/>
            <person name="Steward C.A."/>
            <person name="Sycamore N."/>
            <person name="Tamlyn-Hall G."/>
            <person name="Tester J."/>
            <person name="Theaker A.J."/>
            <person name="Thomas D.W."/>
            <person name="Thorpe A."/>
            <person name="Tracey A."/>
            <person name="Tromans A."/>
            <person name="Tubby B."/>
            <person name="Wall M."/>
            <person name="Wallis J.M."/>
            <person name="West A.P."/>
            <person name="White S.S."/>
            <person name="Whitehead S.L."/>
            <person name="Whittaker H."/>
            <person name="Wild A."/>
            <person name="Willey D.J."/>
            <person name="Wilmer T.E."/>
            <person name="Wood J.M."/>
            <person name="Wray P.W."/>
            <person name="Wyatt J.C."/>
            <person name="Young L."/>
            <person name="Younger R.M."/>
            <person name="Bentley D.R."/>
            <person name="Coulson A."/>
            <person name="Durbin R.M."/>
            <person name="Hubbard T."/>
            <person name="Sulston J.E."/>
            <person name="Dunham I."/>
            <person name="Rogers J."/>
            <person name="Beck S."/>
        </authorList>
    </citation>
    <scope>NUCLEOTIDE SEQUENCE [LARGE SCALE GENOMIC DNA]</scope>
</reference>
<reference key="7">
    <citation type="submission" date="2005-07" db="EMBL/GenBank/DDBJ databases">
        <authorList>
            <person name="Mural R.J."/>
            <person name="Istrail S."/>
            <person name="Sutton G."/>
            <person name="Florea L."/>
            <person name="Halpern A.L."/>
            <person name="Mobarry C.M."/>
            <person name="Lippert R."/>
            <person name="Walenz B."/>
            <person name="Shatkay H."/>
            <person name="Dew I."/>
            <person name="Miller J.R."/>
            <person name="Flanigan M.J."/>
            <person name="Edwards N.J."/>
            <person name="Bolanos R."/>
            <person name="Fasulo D."/>
            <person name="Halldorsson B.V."/>
            <person name="Hannenhalli S."/>
            <person name="Turner R."/>
            <person name="Yooseph S."/>
            <person name="Lu F."/>
            <person name="Nusskern D.R."/>
            <person name="Shue B.C."/>
            <person name="Zheng X.H."/>
            <person name="Zhong F."/>
            <person name="Delcher A.L."/>
            <person name="Huson D.H."/>
            <person name="Kravitz S.A."/>
            <person name="Mouchard L."/>
            <person name="Reinert K."/>
            <person name="Remington K.A."/>
            <person name="Clark A.G."/>
            <person name="Waterman M.S."/>
            <person name="Eichler E.E."/>
            <person name="Adams M.D."/>
            <person name="Hunkapiller M.W."/>
            <person name="Myers E.W."/>
            <person name="Venter J.C."/>
        </authorList>
    </citation>
    <scope>NUCLEOTIDE SEQUENCE [LARGE SCALE GENOMIC DNA]</scope>
</reference>
<reference key="8">
    <citation type="journal article" date="2004" name="Genome Res.">
        <title>The status, quality, and expansion of the NIH full-length cDNA project: the Mammalian Gene Collection (MGC).</title>
        <authorList>
            <consortium name="The MGC Project Team"/>
        </authorList>
    </citation>
    <scope>NUCLEOTIDE SEQUENCE [LARGE SCALE MRNA]</scope>
    <source>
        <tissue>Skin</tissue>
    </source>
</reference>
<reference key="9">
    <citation type="journal article" date="2006" name="Protein Sci.">
        <title>Characterization of the five novel Ly-6 superfamily members encoded in the MHC, and detection of cells expressing their potential ligands.</title>
        <authorList>
            <person name="Mallya M."/>
            <person name="Campbell R.D."/>
            <person name="Aguado B."/>
        </authorList>
    </citation>
    <scope>GLYCOSYLATION</scope>
    <scope>SUBCELLULAR LOCATION</scope>
    <scope>SUBUNIT</scope>
    <scope>GPI-ANCHOR</scope>
    <scope>TISSUE SPECIFICITY</scope>
</reference>
<keyword id="KW-1003">Cell membrane</keyword>
<keyword id="KW-1015">Disulfide bond</keyword>
<keyword id="KW-0325">Glycoprotein</keyword>
<keyword id="KW-0336">GPI-anchor</keyword>
<keyword id="KW-0449">Lipoprotein</keyword>
<keyword id="KW-0472">Membrane</keyword>
<keyword id="KW-1267">Proteomics identification</keyword>
<keyword id="KW-1185">Reference proteome</keyword>
<keyword id="KW-0732">Signal</keyword>
<dbReference type="EMBL" id="AJ012008">
    <property type="protein sequence ID" value="CAB46081.1"/>
    <property type="molecule type" value="Genomic_DNA"/>
</dbReference>
<dbReference type="EMBL" id="AJ315533">
    <property type="protein sequence ID" value="CAC85539.1"/>
    <property type="molecule type" value="mRNA"/>
</dbReference>
<dbReference type="EMBL" id="AF129756">
    <property type="protein sequence ID" value="AAD18076.1"/>
    <property type="molecule type" value="Genomic_DNA"/>
</dbReference>
<dbReference type="EMBL" id="BA000025">
    <property type="protein sequence ID" value="BAB63379.1"/>
    <property type="molecule type" value="Genomic_DNA"/>
</dbReference>
<dbReference type="EMBL" id="AY359119">
    <property type="protein sequence ID" value="AAQ89477.1"/>
    <property type="molecule type" value="mRNA"/>
</dbReference>
<dbReference type="EMBL" id="BX248244">
    <property type="status" value="NOT_ANNOTATED_CDS"/>
    <property type="molecule type" value="Genomic_DNA"/>
</dbReference>
<dbReference type="EMBL" id="AL844216">
    <property type="status" value="NOT_ANNOTATED_CDS"/>
    <property type="molecule type" value="Genomic_DNA"/>
</dbReference>
<dbReference type="EMBL" id="CR354443">
    <property type="status" value="NOT_ANNOTATED_CDS"/>
    <property type="molecule type" value="Genomic_DNA"/>
</dbReference>
<dbReference type="EMBL" id="CR936239">
    <property type="status" value="NOT_ANNOTATED_CDS"/>
    <property type="molecule type" value="Genomic_DNA"/>
</dbReference>
<dbReference type="EMBL" id="CR759787">
    <property type="status" value="NOT_ANNOTATED_CDS"/>
    <property type="molecule type" value="Genomic_DNA"/>
</dbReference>
<dbReference type="EMBL" id="CH471081">
    <property type="protein sequence ID" value="EAX03491.1"/>
    <property type="molecule type" value="Genomic_DNA"/>
</dbReference>
<dbReference type="EMBL" id="BC036302">
    <property type="protein sequence ID" value="AAH36302.2"/>
    <property type="molecule type" value="mRNA"/>
</dbReference>
<dbReference type="CCDS" id="CCDS4714.1"/>
<dbReference type="RefSeq" id="NP_079537.1">
    <property type="nucleotide sequence ID" value="NM_025261.3"/>
</dbReference>
<dbReference type="RefSeq" id="XP_054185896.1">
    <property type="nucleotide sequence ID" value="XM_054329921.1"/>
</dbReference>
<dbReference type="RefSeq" id="XP_054186388.1">
    <property type="nucleotide sequence ID" value="XM_054330413.1"/>
</dbReference>
<dbReference type="RefSeq" id="XP_054186661.1">
    <property type="nucleotide sequence ID" value="XM_054330686.1"/>
</dbReference>
<dbReference type="RefSeq" id="XP_054186881.1">
    <property type="nucleotide sequence ID" value="XM_054330906.1"/>
</dbReference>
<dbReference type="RefSeq" id="XP_054187401.1">
    <property type="nucleotide sequence ID" value="XM_054331426.1"/>
</dbReference>
<dbReference type="RefSeq" id="XP_054212454.1">
    <property type="nucleotide sequence ID" value="XM_054356479.1"/>
</dbReference>
<dbReference type="SMR" id="O95867"/>
<dbReference type="BioGRID" id="123284">
    <property type="interactions" value="18"/>
</dbReference>
<dbReference type="FunCoup" id="O95867">
    <property type="interactions" value="12"/>
</dbReference>
<dbReference type="IntAct" id="O95867">
    <property type="interactions" value="11"/>
</dbReference>
<dbReference type="STRING" id="9606.ENSP00000364978"/>
<dbReference type="GlyCosmos" id="O95867">
    <property type="glycosylation" value="1 site, No reported glycans"/>
</dbReference>
<dbReference type="GlyGen" id="O95867">
    <property type="glycosylation" value="2 sites"/>
</dbReference>
<dbReference type="PhosphoSitePlus" id="O95867"/>
<dbReference type="BioMuta" id="LY6G6C"/>
<dbReference type="jPOST" id="O95867"/>
<dbReference type="MassIVE" id="O95867"/>
<dbReference type="PaxDb" id="9606-ENSP00000364978"/>
<dbReference type="PeptideAtlas" id="O95867"/>
<dbReference type="ProteomicsDB" id="51108"/>
<dbReference type="Pumba" id="O95867"/>
<dbReference type="Antibodypedia" id="27576">
    <property type="antibodies" value="91 antibodies from 18 providers"/>
</dbReference>
<dbReference type="DNASU" id="80740"/>
<dbReference type="Ensembl" id="ENST00000375819.3">
    <property type="protein sequence ID" value="ENSP00000364978.2"/>
    <property type="gene ID" value="ENSG00000204421.3"/>
</dbReference>
<dbReference type="Ensembl" id="ENST00000383413.4">
    <property type="protein sequence ID" value="ENSP00000372905.4"/>
    <property type="gene ID" value="ENSG00000206398.5"/>
</dbReference>
<dbReference type="Ensembl" id="ENST00000419939.2">
    <property type="protein sequence ID" value="ENSP00000388591.2"/>
    <property type="gene ID" value="ENSG00000235452.2"/>
</dbReference>
<dbReference type="Ensembl" id="ENST00000428121.2">
    <property type="protein sequence ID" value="ENSP00000411365.2"/>
    <property type="gene ID" value="ENSG00000228250.2"/>
</dbReference>
<dbReference type="Ensembl" id="ENST00000428498.2">
    <property type="protein sequence ID" value="ENSP00000410398.2"/>
    <property type="gene ID" value="ENSG00000228859.2"/>
</dbReference>
<dbReference type="Ensembl" id="ENST00000434915.2">
    <property type="protein sequence ID" value="ENSP00000415732.2"/>
    <property type="gene ID" value="ENSG00000236183.2"/>
</dbReference>
<dbReference type="Ensembl" id="ENST00000448386.2">
    <property type="protein sequence ID" value="ENSP00000409428.2"/>
    <property type="gene ID" value="ENSG00000235925.3"/>
</dbReference>
<dbReference type="GeneID" id="80740"/>
<dbReference type="KEGG" id="hsa:80740"/>
<dbReference type="MANE-Select" id="ENST00000375819.3">
    <property type="protein sequence ID" value="ENSP00000364978.2"/>
    <property type="RefSeq nucleotide sequence ID" value="NM_025261.3"/>
    <property type="RefSeq protein sequence ID" value="NP_079537.1"/>
</dbReference>
<dbReference type="UCSC" id="uc003nwh.4">
    <property type="organism name" value="human"/>
</dbReference>
<dbReference type="AGR" id="HGNC:13936"/>
<dbReference type="CTD" id="80740"/>
<dbReference type="DisGeNET" id="80740"/>
<dbReference type="GeneCards" id="LY6G6C"/>
<dbReference type="HGNC" id="HGNC:13936">
    <property type="gene designation" value="LY6G6C"/>
</dbReference>
<dbReference type="HPA" id="ENSG00000204421">
    <property type="expression patterns" value="Tissue enriched (skin)"/>
</dbReference>
<dbReference type="MIM" id="610435">
    <property type="type" value="gene"/>
</dbReference>
<dbReference type="neXtProt" id="NX_O95867"/>
<dbReference type="OpenTargets" id="ENSG00000204421"/>
<dbReference type="PharmGKB" id="PA37830"/>
<dbReference type="VEuPathDB" id="HostDB:ENSG00000204421"/>
<dbReference type="eggNOG" id="ENOG502T0T6">
    <property type="taxonomic scope" value="Eukaryota"/>
</dbReference>
<dbReference type="GeneTree" id="ENSGT00390000000752"/>
<dbReference type="HOGENOM" id="CLU_1991884_0_0_1"/>
<dbReference type="InParanoid" id="O95867"/>
<dbReference type="OMA" id="YNTTCCS"/>
<dbReference type="OrthoDB" id="9828511at2759"/>
<dbReference type="PAN-GO" id="O95867">
    <property type="GO annotations" value="2 GO annotations based on evolutionary models"/>
</dbReference>
<dbReference type="PhylomeDB" id="O95867"/>
<dbReference type="TreeFam" id="TF337667"/>
<dbReference type="PathwayCommons" id="O95867"/>
<dbReference type="Reactome" id="R-HSA-163125">
    <property type="pathway name" value="Post-translational modification: synthesis of GPI-anchored proteins"/>
</dbReference>
<dbReference type="SignaLink" id="O95867"/>
<dbReference type="BioGRID-ORCS" id="80740">
    <property type="hits" value="18 hits in 1145 CRISPR screens"/>
</dbReference>
<dbReference type="ChiTaRS" id="LY6G6C">
    <property type="organism name" value="human"/>
</dbReference>
<dbReference type="GenomeRNAi" id="80740"/>
<dbReference type="Pharos" id="O95867">
    <property type="development level" value="Tbio"/>
</dbReference>
<dbReference type="PRO" id="PR:O95867"/>
<dbReference type="Proteomes" id="UP000005640">
    <property type="component" value="Chromosome 6"/>
</dbReference>
<dbReference type="RNAct" id="O95867">
    <property type="molecule type" value="protein"/>
</dbReference>
<dbReference type="Bgee" id="ENSG00000204421">
    <property type="expression patterns" value="Expressed in skin of abdomen and 84 other cell types or tissues"/>
</dbReference>
<dbReference type="ExpressionAtlas" id="O95867">
    <property type="expression patterns" value="baseline and differential"/>
</dbReference>
<dbReference type="GO" id="GO:0005576">
    <property type="term" value="C:extracellular region"/>
    <property type="evidence" value="ECO:0000304"/>
    <property type="project" value="Reactome"/>
</dbReference>
<dbReference type="GO" id="GO:0005886">
    <property type="term" value="C:plasma membrane"/>
    <property type="evidence" value="ECO:0000304"/>
    <property type="project" value="Reactome"/>
</dbReference>
<dbReference type="GO" id="GO:0032991">
    <property type="term" value="C:protein-containing complex"/>
    <property type="evidence" value="ECO:0000314"/>
    <property type="project" value="UniProtKB"/>
</dbReference>
<dbReference type="GO" id="GO:0098552">
    <property type="term" value="C:side of membrane"/>
    <property type="evidence" value="ECO:0007669"/>
    <property type="project" value="UniProtKB-KW"/>
</dbReference>
<dbReference type="GO" id="GO:0042802">
    <property type="term" value="F:identical protein binding"/>
    <property type="evidence" value="ECO:0000314"/>
    <property type="project" value="UniProtKB"/>
</dbReference>
<dbReference type="CDD" id="cd23546">
    <property type="entry name" value="TFP_LU_ECD_Ly6G6c"/>
    <property type="match status" value="1"/>
</dbReference>
<dbReference type="InterPro" id="IPR016054">
    <property type="entry name" value="LY6_UPA_recep-like"/>
</dbReference>
<dbReference type="InterPro" id="IPR039237">
    <property type="entry name" value="LY6G6C"/>
</dbReference>
<dbReference type="InterPro" id="IPR045860">
    <property type="entry name" value="Snake_toxin-like_sf"/>
</dbReference>
<dbReference type="PANTHER" id="PTHR32149">
    <property type="entry name" value="LYMPHOCYTE ANTIGEN 6 COMPLEX LOCUS PROTEIN G6C"/>
    <property type="match status" value="1"/>
</dbReference>
<dbReference type="PANTHER" id="PTHR32149:SF2">
    <property type="entry name" value="LYMPHOCYTE ANTIGEN 6 COMPLEX LOCUS PROTEIN G6C"/>
    <property type="match status" value="1"/>
</dbReference>
<dbReference type="Pfam" id="PF00021">
    <property type="entry name" value="UPAR_LY6"/>
    <property type="match status" value="1"/>
</dbReference>
<dbReference type="SUPFAM" id="SSF57302">
    <property type="entry name" value="Snake toxin-like"/>
    <property type="match status" value="1"/>
</dbReference>
<comment type="subunit">
    <text evidence="3">Monomer.</text>
</comment>
<comment type="interaction">
    <interactant intactId="EBI-9088345">
        <id>O95867</id>
    </interactant>
    <interactant intactId="EBI-12003442">
        <id>Q8WVX3-2</id>
        <label>C4orf3</label>
    </interactant>
    <organismsDiffer>false</organismsDiffer>
    <experiments>3</experiments>
</comment>
<comment type="interaction">
    <interactant intactId="EBI-9088345">
        <id>O95867</id>
    </interactant>
    <interactant intactId="EBI-10314552">
        <id>Q9NVC3</id>
        <label>SLC38A7</label>
    </interactant>
    <organismsDiffer>false</organismsDiffer>
    <experiments>3</experiments>
</comment>
<comment type="interaction">
    <interactant intactId="EBI-9088345">
        <id>O95867</id>
    </interactant>
    <interactant intactId="EBI-12898013">
        <id>Q9NP94</id>
        <label>SLC39A2</label>
    </interactant>
    <organismsDiffer>false</organismsDiffer>
    <experiments>3</experiments>
</comment>
<comment type="interaction">
    <interactant intactId="EBI-9088345">
        <id>O95867</id>
    </interactant>
    <interactant intactId="EBI-10290130">
        <id>Q96JW4</id>
        <label>SLC41A2</label>
    </interactant>
    <organismsDiffer>false</organismsDiffer>
    <experiments>3</experiments>
</comment>
<comment type="interaction">
    <interactant intactId="EBI-9088345">
        <id>O95867</id>
    </interactant>
    <interactant intactId="EBI-12274070">
        <id>Q969S6</id>
        <label>TMEM203</label>
    </interactant>
    <organismsDiffer>false</organismsDiffer>
    <experiments>3</experiments>
</comment>
<comment type="interaction">
    <interactant intactId="EBI-9088345">
        <id>O95867</id>
    </interactant>
    <interactant intactId="EBI-988826">
        <id>Q9Y385</id>
        <label>UBE2J1</label>
    </interactant>
    <organismsDiffer>false</organismsDiffer>
    <experiments>3</experiments>
</comment>
<comment type="interaction">
    <interactant intactId="EBI-9088345">
        <id>O95867</id>
    </interactant>
    <interactant intactId="EBI-751210">
        <id>Q96EC8</id>
        <label>YIPF6</label>
    </interactant>
    <organismsDiffer>false</organismsDiffer>
    <experiments>3</experiments>
</comment>
<comment type="subcellular location">
    <subcellularLocation>
        <location evidence="3">Cell membrane</location>
        <topology evidence="3">Lipid-anchor</topology>
        <topology evidence="3">GPI-anchor</topology>
    </subcellularLocation>
</comment>
<comment type="tissue specificity">
    <text evidence="3">Highly expressed at the leading edges of cells, on filopodia.</text>
</comment>
<comment type="PTM">
    <text evidence="3">N-glycosylated.</text>
</comment>
<feature type="signal peptide" evidence="2">
    <location>
        <begin position="1"/>
        <end position="18"/>
    </location>
</feature>
<feature type="chain" id="PRO_0000036176" description="Lymphocyte antigen 6 complex locus protein G6c">
    <location>
        <begin position="19"/>
        <end position="99"/>
    </location>
</feature>
<feature type="propeptide" id="PRO_0000323019" description="Removed in mature form" evidence="2">
    <location>
        <begin position="100"/>
        <end position="125"/>
    </location>
</feature>
<feature type="domain" description="UPAR/Ly6">
    <location>
        <begin position="20"/>
        <end position="111"/>
    </location>
</feature>
<feature type="lipid moiety-binding region" description="GPI-anchor amidated serine" evidence="2">
    <location>
        <position position="99"/>
    </location>
</feature>
<feature type="glycosylation site" description="N-linked (GlcNAc...) asparagine" evidence="2">
    <location>
        <position position="88"/>
    </location>
</feature>
<feature type="disulfide bond" evidence="1">
    <location>
        <begin position="22"/>
        <end position="47"/>
    </location>
</feature>
<feature type="disulfide bond" evidence="1">
    <location>
        <begin position="25"/>
        <end position="33"/>
    </location>
</feature>
<feature type="disulfide bond" evidence="1">
    <location>
        <begin position="39"/>
        <end position="65"/>
    </location>
</feature>
<feature type="disulfide bond" evidence="1">
    <location>
        <begin position="92"/>
        <end position="97"/>
    </location>
</feature>
<feature type="sequence variant" id="VAR_039541" description="In dbSNP:rs13214568.">
    <original>L</original>
    <variation>M</variation>
    <location>
        <position position="63"/>
    </location>
</feature>
<evidence type="ECO:0000250" key="1"/>
<evidence type="ECO:0000255" key="2"/>
<evidence type="ECO:0000269" key="3">
    <source>
    </source>
</evidence>
<name>LY66C_HUMAN</name>
<organism>
    <name type="scientific">Homo sapiens</name>
    <name type="common">Human</name>
    <dbReference type="NCBI Taxonomy" id="9606"/>
    <lineage>
        <taxon>Eukaryota</taxon>
        <taxon>Metazoa</taxon>
        <taxon>Chordata</taxon>
        <taxon>Craniata</taxon>
        <taxon>Vertebrata</taxon>
        <taxon>Euteleostomi</taxon>
        <taxon>Mammalia</taxon>
        <taxon>Eutheria</taxon>
        <taxon>Euarchontoglires</taxon>
        <taxon>Primates</taxon>
        <taxon>Haplorrhini</taxon>
        <taxon>Catarrhini</taxon>
        <taxon>Hominidae</taxon>
        <taxon>Homo</taxon>
    </lineage>
</organism>
<gene>
    <name type="primary">LY6G6C</name>
    <name type="synonym">C6orf24</name>
    <name type="synonym">G6C</name>
    <name type="synonym">NG24</name>
    <name type="ORF">UNQ1947/PRO4430</name>
</gene>
<protein>
    <recommendedName>
        <fullName>Lymphocyte antigen 6 complex locus protein G6c</fullName>
    </recommendedName>
</protein>